<reference key="1">
    <citation type="journal article" date="2007" name="Nature">
        <title>Evolution of genes and genomes on the Drosophila phylogeny.</title>
        <authorList>
            <consortium name="Drosophila 12 genomes consortium"/>
        </authorList>
    </citation>
    <scope>NUCLEOTIDE SEQUENCE [LARGE SCALE GENOMIC DNA]</scope>
    <source>
        <strain>Rob3c / Tucson 14021-0248.25</strain>
    </source>
</reference>
<organism>
    <name type="scientific">Drosophila sechellia</name>
    <name type="common">Fruit fly</name>
    <dbReference type="NCBI Taxonomy" id="7238"/>
    <lineage>
        <taxon>Eukaryota</taxon>
        <taxon>Metazoa</taxon>
        <taxon>Ecdysozoa</taxon>
        <taxon>Arthropoda</taxon>
        <taxon>Hexapoda</taxon>
        <taxon>Insecta</taxon>
        <taxon>Pterygota</taxon>
        <taxon>Neoptera</taxon>
        <taxon>Endopterygota</taxon>
        <taxon>Diptera</taxon>
        <taxon>Brachycera</taxon>
        <taxon>Muscomorpha</taxon>
        <taxon>Ephydroidea</taxon>
        <taxon>Drosophilidae</taxon>
        <taxon>Drosophila</taxon>
        <taxon>Sophophora</taxon>
    </lineage>
</organism>
<name>PLK4_DROSE</name>
<accession>B4IAQ8</accession>
<feature type="chain" id="PRO_0000385295" description="Serine/threonine-protein kinase PLK4">
    <location>
        <begin position="1"/>
        <end position="769"/>
    </location>
</feature>
<feature type="domain" description="Protein kinase" evidence="3">
    <location>
        <begin position="14"/>
        <end position="267"/>
    </location>
</feature>
<feature type="domain" description="Cryptic POLO box 1 (CPB1)" evidence="4">
    <location>
        <begin position="381"/>
        <end position="498"/>
    </location>
</feature>
<feature type="domain" description="Cryptic POLO box 2 (CPB2)" evidence="5">
    <location>
        <begin position="499"/>
        <end position="602"/>
    </location>
</feature>
<feature type="domain" description="POLO box" evidence="2">
    <location>
        <begin position="660"/>
        <end position="739"/>
    </location>
</feature>
<feature type="active site" description="Proton acceptor" evidence="3">
    <location>
        <position position="138"/>
    </location>
</feature>
<feature type="binding site" evidence="3">
    <location>
        <begin position="20"/>
        <end position="28"/>
    </location>
    <ligand>
        <name>ATP</name>
        <dbReference type="ChEBI" id="CHEBI:30616"/>
    </ligand>
</feature>
<feature type="binding site" evidence="3">
    <location>
        <position position="43"/>
    </location>
    <ligand>
        <name>ATP</name>
        <dbReference type="ChEBI" id="CHEBI:30616"/>
    </ligand>
</feature>
<comment type="function">
    <text evidence="1">Serine/threonine-protein kinase that plays a central role in centriole duplication. Able to trigger procentriole formation on the surface of the mother centriole cylinder, using mother centriole as a platform, leading to the recruitment of centriole biogenesis proteins such as sas-6. When overexpressed, it is able to induce centrosome amplification through the simultaneous generation of multiple procentrioles adjoining each parental centriole during S phase. Centrosome amplification following overexpression can initiate tumorigenesis, highlighting the importance of centrosome regulation in cancers (By similarity).</text>
</comment>
<comment type="catalytic activity">
    <reaction>
        <text>L-seryl-[protein] + ATP = O-phospho-L-seryl-[protein] + ADP + H(+)</text>
        <dbReference type="Rhea" id="RHEA:17989"/>
        <dbReference type="Rhea" id="RHEA-COMP:9863"/>
        <dbReference type="Rhea" id="RHEA-COMP:11604"/>
        <dbReference type="ChEBI" id="CHEBI:15378"/>
        <dbReference type="ChEBI" id="CHEBI:29999"/>
        <dbReference type="ChEBI" id="CHEBI:30616"/>
        <dbReference type="ChEBI" id="CHEBI:83421"/>
        <dbReference type="ChEBI" id="CHEBI:456216"/>
        <dbReference type="EC" id="2.7.11.21"/>
    </reaction>
</comment>
<comment type="catalytic activity">
    <reaction>
        <text>L-threonyl-[protein] + ATP = O-phospho-L-threonyl-[protein] + ADP + H(+)</text>
        <dbReference type="Rhea" id="RHEA:46608"/>
        <dbReference type="Rhea" id="RHEA-COMP:11060"/>
        <dbReference type="Rhea" id="RHEA-COMP:11605"/>
        <dbReference type="ChEBI" id="CHEBI:15378"/>
        <dbReference type="ChEBI" id="CHEBI:30013"/>
        <dbReference type="ChEBI" id="CHEBI:30616"/>
        <dbReference type="ChEBI" id="CHEBI:61977"/>
        <dbReference type="ChEBI" id="CHEBI:456216"/>
        <dbReference type="EC" id="2.7.11.21"/>
    </reaction>
</comment>
<comment type="subunit">
    <text evidence="1">Homodimer.</text>
</comment>
<comment type="subcellular location">
    <subcellularLocation>
        <location evidence="1">Cytoplasm</location>
        <location evidence="1">Cytoskeleton</location>
        <location evidence="1">Microtubule organizing center</location>
        <location evidence="1">Centrosome</location>
        <location evidence="1">Centriole</location>
    </subcellularLocation>
</comment>
<comment type="PTM">
    <text evidence="1">Ubiquitinated by the SCF(Slimb) ubiquitin ligase complex; leading to its degradation by the proteasome during interphase and regulating centriole number and ensuring the block to centriole reduplication.</text>
</comment>
<comment type="similarity">
    <text evidence="3 4 5">Belongs to the protein kinase superfamily. Ser/Thr protein kinase family. CDC5/Polo subfamily.</text>
</comment>
<proteinExistence type="inferred from homology"/>
<sequence length="769" mass="86000">MLSNRAFGETIEDYEVQHLLGKGGFATVYKARCLHTHQDVAIKMIDKKLIQGTGLTSRVRQEVEIHSRLKHPSVLQLYTFFQDANYVYLVLELAHNGELHRYMNHIARHFTETEAASILKQVVAGLLYLHSHNIMHRDISLSNLLLSREMHVKIADFGLATQLKRPDERHMTMCGTPNYISPEVVSRSSHGLPADVWSVGCMLYTLLVGRPPFETDAVQSTLNKVVMSEYIMPAHLSYEAQDLINKLLKKLPHERITLEAVLCHPFMLKCSNGGHSAPGALNMFSQSMESGDSGIITFASSDSRNSQQIRSVENSGPQQVLPQIREEFKQVHHKLPYEQPGLFGQASTGLAEPNWTGAAKTSAFRMETGMVPNSKPASLKEDRISVPPLNTKRLLPTRYKTKNAIMSILRNGEVVLEFLKFRPTYNEDRINDICRISDDGQRIIIYQPDPGRGLPVREQPPDLQIPSGDCVYNYDNLPNKHWKKYIYGARFVGLVKSKTPKVTYFSTLGKCQLMETMTDSEIRFYSGAKLLKAPTEGLKVYDRNGMLLSDHSCSESRSLIEHGNECFTHCVNISNALEVAQTKDNSCFPVTIGRRPITDVQPAQRLDGLRDTTNITFSTPKSNQGSINFSLSTISSTRNTSDFGTNCSRSNMLAAHQNIPIKRINVPDIGIATELSHGVVQVQFYDGSVVSVIPSMQGGGITYTQPNGTSTHFGKDDDLPFPVRDRVGQIPNIQLKLKTAPLLGSGRKTDYNNAMTPKTTTPYYNRMLL</sequence>
<evidence type="ECO:0000250" key="1"/>
<evidence type="ECO:0000255" key="2">
    <source>
        <dbReference type="PROSITE-ProRule" id="PRU00154"/>
    </source>
</evidence>
<evidence type="ECO:0000255" key="3">
    <source>
        <dbReference type="PROSITE-ProRule" id="PRU00159"/>
    </source>
</evidence>
<evidence type="ECO:0000255" key="4">
    <source>
        <dbReference type="PROSITE-ProRule" id="PRU01328"/>
    </source>
</evidence>
<evidence type="ECO:0000255" key="5">
    <source>
        <dbReference type="PROSITE-ProRule" id="PRU01329"/>
    </source>
</evidence>
<gene>
    <name type="primary">SAK</name>
    <name type="ORF">GM22133</name>
</gene>
<keyword id="KW-0067">ATP-binding</keyword>
<keyword id="KW-0963">Cytoplasm</keyword>
<keyword id="KW-0206">Cytoskeleton</keyword>
<keyword id="KW-0418">Kinase</keyword>
<keyword id="KW-0547">Nucleotide-binding</keyword>
<keyword id="KW-1185">Reference proteome</keyword>
<keyword id="KW-0723">Serine/threonine-protein kinase</keyword>
<keyword id="KW-0808">Transferase</keyword>
<keyword id="KW-0832">Ubl conjugation</keyword>
<dbReference type="EC" id="2.7.11.21"/>
<dbReference type="EMBL" id="CH480826">
    <property type="protein sequence ID" value="EDW44371.1"/>
    <property type="molecule type" value="Genomic_DNA"/>
</dbReference>
<dbReference type="RefSeq" id="XP_002040818.1">
    <property type="nucleotide sequence ID" value="XM_002040782.1"/>
</dbReference>
<dbReference type="SMR" id="B4IAQ8"/>
<dbReference type="STRING" id="7238.B4IAQ8"/>
<dbReference type="EnsemblMetazoa" id="FBtr0205118">
    <property type="protein sequence ID" value="FBpp0203610"/>
    <property type="gene ID" value="FBgn0177004"/>
</dbReference>
<dbReference type="GeneID" id="6616457"/>
<dbReference type="KEGG" id="dse:6616457"/>
<dbReference type="HOGENOM" id="CLU_008726_2_0_1"/>
<dbReference type="OMA" id="LPSKHWK"/>
<dbReference type="PhylomeDB" id="B4IAQ8"/>
<dbReference type="ChiTaRS" id="SAK">
    <property type="organism name" value="fly"/>
</dbReference>
<dbReference type="Proteomes" id="UP000001292">
    <property type="component" value="Unassembled WGS sequence"/>
</dbReference>
<dbReference type="GO" id="GO:0005814">
    <property type="term" value="C:centriole"/>
    <property type="evidence" value="ECO:0007669"/>
    <property type="project" value="UniProtKB-SubCell"/>
</dbReference>
<dbReference type="GO" id="GO:0005737">
    <property type="term" value="C:cytoplasm"/>
    <property type="evidence" value="ECO:0007669"/>
    <property type="project" value="UniProtKB-KW"/>
</dbReference>
<dbReference type="GO" id="GO:0005634">
    <property type="term" value="C:nucleus"/>
    <property type="evidence" value="ECO:0007669"/>
    <property type="project" value="TreeGrafter"/>
</dbReference>
<dbReference type="GO" id="GO:0005524">
    <property type="term" value="F:ATP binding"/>
    <property type="evidence" value="ECO:0007669"/>
    <property type="project" value="UniProtKB-KW"/>
</dbReference>
<dbReference type="GO" id="GO:0042802">
    <property type="term" value="F:identical protein binding"/>
    <property type="evidence" value="ECO:0007669"/>
    <property type="project" value="EnsemblMetazoa"/>
</dbReference>
<dbReference type="GO" id="GO:0106310">
    <property type="term" value="F:protein serine kinase activity"/>
    <property type="evidence" value="ECO:0007669"/>
    <property type="project" value="RHEA"/>
</dbReference>
<dbReference type="GO" id="GO:0004674">
    <property type="term" value="F:protein serine/threonine kinase activity"/>
    <property type="evidence" value="ECO:0007669"/>
    <property type="project" value="UniProtKB-KW"/>
</dbReference>
<dbReference type="GO" id="GO:0007099">
    <property type="term" value="P:centriole replication"/>
    <property type="evidence" value="ECO:0007669"/>
    <property type="project" value="EnsemblMetazoa"/>
</dbReference>
<dbReference type="GO" id="GO:0007140">
    <property type="term" value="P:male meiotic nuclear division"/>
    <property type="evidence" value="ECO:0007669"/>
    <property type="project" value="EnsemblMetazoa"/>
</dbReference>
<dbReference type="GO" id="GO:0045732">
    <property type="term" value="P:positive regulation of protein catabolic process"/>
    <property type="evidence" value="ECO:0007669"/>
    <property type="project" value="EnsemblMetazoa"/>
</dbReference>
<dbReference type="GO" id="GO:0046599">
    <property type="term" value="P:regulation of centriole replication"/>
    <property type="evidence" value="ECO:0007669"/>
    <property type="project" value="EnsemblMetazoa"/>
</dbReference>
<dbReference type="GO" id="GO:0031647">
    <property type="term" value="P:regulation of protein stability"/>
    <property type="evidence" value="ECO:0007669"/>
    <property type="project" value="EnsemblMetazoa"/>
</dbReference>
<dbReference type="GO" id="GO:0007288">
    <property type="term" value="P:sperm axoneme assembly"/>
    <property type="evidence" value="ECO:0007669"/>
    <property type="project" value="EnsemblMetazoa"/>
</dbReference>
<dbReference type="GO" id="GO:0035186">
    <property type="term" value="P:syncytial blastoderm mitotic cell cycle"/>
    <property type="evidence" value="ECO:0007669"/>
    <property type="project" value="EnsemblMetazoa"/>
</dbReference>
<dbReference type="CDD" id="cd13114">
    <property type="entry name" value="POLO_box_Plk4_1"/>
    <property type="match status" value="1"/>
</dbReference>
<dbReference type="CDD" id="cd13115">
    <property type="entry name" value="POLO_box_Plk4_2"/>
    <property type="match status" value="1"/>
</dbReference>
<dbReference type="CDD" id="cd13116">
    <property type="entry name" value="POLO_box_Plk4_3"/>
    <property type="match status" value="1"/>
</dbReference>
<dbReference type="FunFam" id="3.30.200.20:FF:000042">
    <property type="entry name" value="Aurora kinase A"/>
    <property type="match status" value="1"/>
</dbReference>
<dbReference type="FunFam" id="1.10.510.10:FF:000576">
    <property type="entry name" value="Serine/threonine-protein kinase PLK4"/>
    <property type="match status" value="1"/>
</dbReference>
<dbReference type="FunFam" id="2.40.50.930:FF:000001">
    <property type="entry name" value="Serine/threonine-protein kinase PLK4"/>
    <property type="match status" value="1"/>
</dbReference>
<dbReference type="FunFam" id="3.30.1120.130:FF:000002">
    <property type="entry name" value="Serine/threonine-protein kinase PLK4"/>
    <property type="match status" value="1"/>
</dbReference>
<dbReference type="FunFam" id="3.30.1120.120:FF:000001">
    <property type="entry name" value="serine/threonine-protein kinase PLK4 isoform X2"/>
    <property type="match status" value="1"/>
</dbReference>
<dbReference type="Gene3D" id="2.40.50.930">
    <property type="match status" value="1"/>
</dbReference>
<dbReference type="Gene3D" id="3.30.1120.120">
    <property type="match status" value="1"/>
</dbReference>
<dbReference type="Gene3D" id="3.30.1120.130">
    <property type="match status" value="1"/>
</dbReference>
<dbReference type="Gene3D" id="1.10.510.10">
    <property type="entry name" value="Transferase(Phosphotransferase) domain 1"/>
    <property type="match status" value="1"/>
</dbReference>
<dbReference type="InterPro" id="IPR011009">
    <property type="entry name" value="Kinase-like_dom_sf"/>
</dbReference>
<dbReference type="InterPro" id="IPR047108">
    <property type="entry name" value="Plk4-like_POLO_box_2_sf"/>
</dbReference>
<dbReference type="InterPro" id="IPR000959">
    <property type="entry name" value="POLO_box_dom"/>
</dbReference>
<dbReference type="InterPro" id="IPR033699">
    <property type="entry name" value="POLO_box_Plk4_1"/>
</dbReference>
<dbReference type="InterPro" id="IPR033698">
    <property type="entry name" value="POLO_box_Plk4_2"/>
</dbReference>
<dbReference type="InterPro" id="IPR033696">
    <property type="entry name" value="POLO_box_Plk4_C"/>
</dbReference>
<dbReference type="InterPro" id="IPR000719">
    <property type="entry name" value="Prot_kinase_dom"/>
</dbReference>
<dbReference type="InterPro" id="IPR017441">
    <property type="entry name" value="Protein_kinase_ATP_BS"/>
</dbReference>
<dbReference type="InterPro" id="IPR046437">
    <property type="entry name" value="Ser_Thr-PK_POLO_box_1_sf"/>
</dbReference>
<dbReference type="InterPro" id="IPR008266">
    <property type="entry name" value="Tyr_kinase_AS"/>
</dbReference>
<dbReference type="PANTHER" id="PTHR24345">
    <property type="entry name" value="SERINE/THREONINE-PROTEIN KINASE PLK"/>
    <property type="match status" value="1"/>
</dbReference>
<dbReference type="PANTHER" id="PTHR24345:SF91">
    <property type="entry name" value="SERINE_THREONINE-PROTEIN KINASE PLK4"/>
    <property type="match status" value="1"/>
</dbReference>
<dbReference type="Pfam" id="PF00069">
    <property type="entry name" value="Pkinase"/>
    <property type="match status" value="1"/>
</dbReference>
<dbReference type="Pfam" id="PF18190">
    <property type="entry name" value="Plk4_PB1"/>
    <property type="match status" value="1"/>
</dbReference>
<dbReference type="Pfam" id="PF18409">
    <property type="entry name" value="Plk4_PB2"/>
    <property type="match status" value="1"/>
</dbReference>
<dbReference type="SUPFAM" id="SSF82615">
    <property type="entry name" value="Polo-box domain"/>
    <property type="match status" value="1"/>
</dbReference>
<dbReference type="SUPFAM" id="SSF56112">
    <property type="entry name" value="Protein kinase-like (PK-like)"/>
    <property type="match status" value="1"/>
</dbReference>
<dbReference type="PROSITE" id="PS51984">
    <property type="entry name" value="CPB1"/>
    <property type="match status" value="1"/>
</dbReference>
<dbReference type="PROSITE" id="PS51985">
    <property type="entry name" value="CPB2"/>
    <property type="match status" value="1"/>
</dbReference>
<dbReference type="PROSITE" id="PS50078">
    <property type="entry name" value="POLO_BOX"/>
    <property type="match status" value="1"/>
</dbReference>
<dbReference type="PROSITE" id="PS00107">
    <property type="entry name" value="PROTEIN_KINASE_ATP"/>
    <property type="match status" value="1"/>
</dbReference>
<dbReference type="PROSITE" id="PS50011">
    <property type="entry name" value="PROTEIN_KINASE_DOM"/>
    <property type="match status" value="1"/>
</dbReference>
<protein>
    <recommendedName>
        <fullName>Serine/threonine-protein kinase PLK4</fullName>
        <ecNumber>2.7.11.21</ecNumber>
    </recommendedName>
    <alternativeName>
        <fullName>Polo-like kinase 4</fullName>
        <shortName>PLK-4</shortName>
    </alternativeName>
    <alternativeName>
        <fullName>Serine/threonine-protein kinase SAK</fullName>
    </alternativeName>
</protein>